<evidence type="ECO:0000250" key="1"/>
<evidence type="ECO:0000250" key="2">
    <source>
        <dbReference type="UniProtKB" id="P03300"/>
    </source>
</evidence>
<evidence type="ECO:0000250" key="3">
    <source>
        <dbReference type="UniProtKB" id="P03303"/>
    </source>
</evidence>
<evidence type="ECO:0000250" key="4">
    <source>
        <dbReference type="UniProtKB" id="P08617"/>
    </source>
</evidence>
<evidence type="ECO:0000255" key="5"/>
<evidence type="ECO:0000255" key="6">
    <source>
        <dbReference type="PROSITE-ProRule" id="PRU00539"/>
    </source>
</evidence>
<evidence type="ECO:0000255" key="7">
    <source>
        <dbReference type="PROSITE-ProRule" id="PRU00551"/>
    </source>
</evidence>
<evidence type="ECO:0000255" key="8">
    <source>
        <dbReference type="PROSITE-ProRule" id="PRU01222"/>
    </source>
</evidence>
<evidence type="ECO:0000305" key="9"/>
<proteinExistence type="inferred from homology"/>
<accession>Q5Y944</accession>
<reference key="1">
    <citation type="journal article" date="2004" name="J. Gen. Virol.">
        <title>Characterization of the complete genomic sequence of genotype II hepatitis A virus (CF53/Berne isolate).</title>
        <authorList>
            <person name="Lu L."/>
            <person name="Ching K.Z."/>
            <person name="de Paula V.S."/>
            <person name="Nakano T."/>
            <person name="Siegl G."/>
            <person name="Weitz M."/>
            <person name="Robertson B.H."/>
        </authorList>
    </citation>
    <scope>NUCLEOTIDE SEQUENCE [GENOMIC RNA]</scope>
    <source>
        <strain>CF53/Berne</strain>
    </source>
</reference>
<reference key="2">
    <citation type="journal article" date="1992" name="J. Gen. Virol.">
        <title>Genetic relatedness of hepatitis A virus strains recovered from different geographical regions.</title>
        <authorList>
            <person name="Robertson B.H."/>
            <person name="Jansen R.W."/>
            <person name="Khanna B."/>
            <person name="Totsuka A."/>
            <person name="Nainan O.V."/>
            <person name="Siegl G."/>
            <person name="Widell A."/>
            <person name="Margolis H.S."/>
            <person name="Isomura S."/>
            <person name="Ito K."/>
            <person name="Ishizu T."/>
            <person name="Moritsugu Y."/>
            <person name="Lemon S.M."/>
        </authorList>
    </citation>
    <scope>NUCLEOTIDE SEQUENCE [GENOMIC RNA] OF 764-819</scope>
</reference>
<organismHost>
    <name type="scientific">Homo sapiens</name>
    <name type="common">Human</name>
    <dbReference type="NCBI Taxonomy" id="9606"/>
</organismHost>
<organism>
    <name type="scientific">Human hepatitis A virus genotype IIA (isolate CF-53)</name>
    <name type="common">HHAV</name>
    <name type="synonym">Human hepatitis A virus (isolate Human/France/CF-53/1979)</name>
    <dbReference type="NCBI Taxonomy" id="470591"/>
    <lineage>
        <taxon>Viruses</taxon>
        <taxon>Riboviria</taxon>
        <taxon>Orthornavirae</taxon>
        <taxon>Pisuviricota</taxon>
        <taxon>Pisoniviricetes</taxon>
        <taxon>Picornavirales</taxon>
        <taxon>Picornaviridae</taxon>
        <taxon>Heptrevirinae</taxon>
        <taxon>Hepatovirus</taxon>
        <taxon>Hepatovirus ahepa</taxon>
        <taxon>Hepatovirus A</taxon>
    </lineage>
</organism>
<keyword id="KW-0067">ATP-binding</keyword>
<keyword id="KW-0167">Capsid protein</keyword>
<keyword id="KW-0175">Coiled coil</keyword>
<keyword id="KW-0191">Covalent protein-RNA linkage</keyword>
<keyword id="KW-1015">Disulfide bond</keyword>
<keyword id="KW-0347">Helicase</keyword>
<keyword id="KW-1035">Host cytoplasm</keyword>
<keyword id="KW-1036">Host cytoplasmic vesicle</keyword>
<keyword id="KW-1039">Host endosome</keyword>
<keyword id="KW-1043">Host membrane</keyword>
<keyword id="KW-1045">Host mitochondrion</keyword>
<keyword id="KW-1047">Host mitochondrion outer membrane</keyword>
<keyword id="KW-0945">Host-virus interaction</keyword>
<keyword id="KW-0378">Hydrolase</keyword>
<keyword id="KW-1090">Inhibition of host innate immune response by virus</keyword>
<keyword id="KW-1097">Inhibition of host MAVS by virus</keyword>
<keyword id="KW-1113">Inhibition of host RLR pathway by virus</keyword>
<keyword id="KW-0922">Interferon antiviral system evasion</keyword>
<keyword id="KW-0407">Ion channel</keyword>
<keyword id="KW-0406">Ion transport</keyword>
<keyword id="KW-0472">Membrane</keyword>
<keyword id="KW-0547">Nucleotide-binding</keyword>
<keyword id="KW-0548">Nucleotidyltransferase</keyword>
<keyword id="KW-0597">Phosphoprotein</keyword>
<keyword id="KW-0645">Protease</keyword>
<keyword id="KW-0694">RNA-binding</keyword>
<keyword id="KW-0696">RNA-directed RNA polymerase</keyword>
<keyword id="KW-1143">T=pseudo3 icosahedral capsid protein</keyword>
<keyword id="KW-0788">Thiol protease</keyword>
<keyword id="KW-0808">Transferase</keyword>
<keyword id="KW-0812">Transmembrane</keyword>
<keyword id="KW-1133">Transmembrane helix</keyword>
<keyword id="KW-0813">Transport</keyword>
<keyword id="KW-1161">Viral attachment to host cell</keyword>
<keyword id="KW-0899">Viral immunoevasion</keyword>
<keyword id="KW-1182">Viral ion channel</keyword>
<keyword id="KW-0693">Viral RNA replication</keyword>
<keyword id="KW-0946">Virion</keyword>
<keyword id="KW-1160">Virus entry into host cell</keyword>
<name>POLG_HAVCF</name>
<feature type="chain" id="PRO_0000310599" description="Genome polyprotein">
    <location>
        <begin position="1"/>
        <end position="2225"/>
    </location>
</feature>
<feature type="chain" id="PRO_0000310600" description="Capsid protein VP0">
    <location>
        <begin position="1"/>
        <end position="245"/>
    </location>
</feature>
<feature type="chain" id="PRO_0000310601" description="Capsid protein VP4">
    <location>
        <begin position="1"/>
        <end position="23"/>
    </location>
</feature>
<feature type="chain" id="PRO_0000310602" description="Capsid protein VP2">
    <location>
        <begin position="24"/>
        <end position="245"/>
    </location>
</feature>
<feature type="chain" id="PRO_0000310603" description="Capsid protein VP3">
    <location>
        <begin position="246"/>
        <end position="491"/>
    </location>
</feature>
<feature type="chain" id="PRO_0000310604" description="Protein VP1-2A">
    <location>
        <begin position="492"/>
        <end position="836"/>
    </location>
</feature>
<feature type="chain" id="PRO_0000310605" description="Capsid protein VP1">
    <location>
        <begin position="492"/>
        <end position="765"/>
    </location>
</feature>
<feature type="chain" id="PRO_0000310606" description="Assembly signal 2A">
    <location>
        <begin position="766"/>
        <end position="836"/>
    </location>
</feature>
<feature type="chain" id="PRO_0000310607" description="Protein 2BC">
    <location>
        <begin position="837"/>
        <end position="1422"/>
    </location>
</feature>
<feature type="chain" id="PRO_0000310608" description="Protein 2B">
    <location>
        <begin position="837"/>
        <end position="1087"/>
    </location>
</feature>
<feature type="chain" id="PRO_0000310609" description="Protein 2C">
    <location>
        <begin position="1088"/>
        <end position="1422"/>
    </location>
</feature>
<feature type="chain" id="PRO_0000310610" description="Protein 3ABCD">
    <location>
        <begin position="1423"/>
        <end position="2225"/>
    </location>
</feature>
<feature type="chain" id="PRO_0000310611" description="Protein 3ABC">
    <location>
        <begin position="1423"/>
        <end position="1736"/>
    </location>
</feature>
<feature type="chain" id="PRO_0000310612" description="Protein 3AB">
    <location>
        <begin position="1423"/>
        <end position="1517"/>
    </location>
</feature>
<feature type="chain" id="PRO_0000310613" description="Protein 3A">
    <location>
        <begin position="1423"/>
        <end position="1494"/>
    </location>
</feature>
<feature type="chain" id="PRO_0000310614" description="Viral protein genome-linked">
    <location>
        <begin position="1495"/>
        <end position="1517"/>
    </location>
</feature>
<feature type="chain" id="PRO_0000310615" description="Protein 3CD">
    <location>
        <begin position="1518"/>
        <end position="2225"/>
    </location>
</feature>
<feature type="chain" id="PRO_0000310616" description="Protease 3C">
    <location>
        <begin position="1518"/>
        <end position="1736"/>
    </location>
</feature>
<feature type="chain" id="PRO_0000310617" description="RNA-directed RNA polymerase 3D-POL">
    <location>
        <begin position="1737"/>
        <end position="2225"/>
    </location>
</feature>
<feature type="transmembrane region" description="Helical" evidence="5">
    <location>
        <begin position="1011"/>
        <end position="1031"/>
    </location>
</feature>
<feature type="transmembrane region" description="Helical" evidence="5">
    <location>
        <begin position="1460"/>
        <end position="1480"/>
    </location>
</feature>
<feature type="domain" description="SF3 helicase" evidence="7">
    <location>
        <begin position="1204"/>
        <end position="1366"/>
    </location>
</feature>
<feature type="domain" description="Peptidase C3" evidence="8">
    <location>
        <begin position="1512"/>
        <end position="1726"/>
    </location>
</feature>
<feature type="domain" description="RdRp catalytic" evidence="6">
    <location>
        <begin position="1974"/>
        <end position="2095"/>
    </location>
</feature>
<feature type="region of interest" description="Involved in P1-2A pentamerization" evidence="4">
    <location>
        <begin position="766"/>
        <end position="836"/>
    </location>
</feature>
<feature type="region of interest" description="Membrane-penetrating ability" evidence="4">
    <location>
        <begin position="1043"/>
        <end position="1070"/>
    </location>
</feature>
<feature type="coiled-coil region" evidence="5">
    <location>
        <begin position="1127"/>
        <end position="1152"/>
    </location>
</feature>
<feature type="short sequence motif" description="(L)YPX(n)L motif" evidence="4">
    <location>
        <begin position="167"/>
        <end position="171"/>
    </location>
</feature>
<feature type="short sequence motif" description="(L)YPX(n)L motif" evidence="4">
    <location>
        <begin position="200"/>
        <end position="205"/>
    </location>
</feature>
<feature type="active site" description="For protease 3C activity" evidence="8">
    <location>
        <position position="1561"/>
    </location>
</feature>
<feature type="active site" description="For protease 3C activity" evidence="8">
    <location>
        <position position="1601"/>
    </location>
</feature>
<feature type="active site" description="For protease 3C activity" evidence="8">
    <location>
        <position position="1689"/>
    </location>
</feature>
<feature type="binding site" evidence="7">
    <location>
        <begin position="1230"/>
        <end position="1237"/>
    </location>
    <ligand>
        <name>ATP</name>
        <dbReference type="ChEBI" id="CHEBI:30616"/>
    </ligand>
</feature>
<feature type="site" description="Cleavage" evidence="5">
    <location>
        <begin position="23"/>
        <end position="24"/>
    </location>
</feature>
<feature type="site" description="Cleavage; by protease 3C" evidence="4">
    <location>
        <begin position="245"/>
        <end position="246"/>
    </location>
</feature>
<feature type="site" description="Cleavage; by protease 3C" evidence="4">
    <location>
        <begin position="491"/>
        <end position="492"/>
    </location>
</feature>
<feature type="site" description="Cleavage; partial; by host" evidence="4">
    <location>
        <begin position="765"/>
        <end position="766"/>
    </location>
</feature>
<feature type="site" description="Important for VP1 folding and capsid assembly" evidence="4">
    <location>
        <position position="769"/>
    </location>
</feature>
<feature type="site" description="Cleavage; by protease 3C" evidence="4">
    <location>
        <begin position="836"/>
        <end position="837"/>
    </location>
</feature>
<feature type="site" description="Cleavage; by protease 3C" evidence="4">
    <location>
        <begin position="1087"/>
        <end position="1088"/>
    </location>
</feature>
<feature type="site" description="Cleavage; by protease 3C" evidence="4">
    <location>
        <begin position="1422"/>
        <end position="1423"/>
    </location>
</feature>
<feature type="site" description="Cleavage; by protease 3C" evidence="4">
    <location>
        <begin position="1494"/>
        <end position="1495"/>
    </location>
</feature>
<feature type="site" description="Cleavage; by protease 3C" evidence="4">
    <location>
        <begin position="1517"/>
        <end position="1518"/>
    </location>
</feature>
<feature type="site" description="Cleavage; by protease 3C" evidence="4">
    <location>
        <begin position="1736"/>
        <end position="1737"/>
    </location>
</feature>
<feature type="modified residue" description="O-(5'-phospho-RNA)-tyrosine" evidence="1">
    <location>
        <position position="1497"/>
    </location>
</feature>
<feature type="disulfide bond" description="Interchain" evidence="4">
    <location>
        <position position="1541"/>
    </location>
</feature>
<protein>
    <recommendedName>
        <fullName>Genome polyprotein</fullName>
    </recommendedName>
    <component>
        <recommendedName>
            <fullName>Capsid protein VP0</fullName>
        </recommendedName>
        <alternativeName>
            <fullName>VP4-VP2</fullName>
        </alternativeName>
    </component>
    <component>
        <recommendedName>
            <fullName>Capsid protein VP4</fullName>
        </recommendedName>
        <alternativeName>
            <fullName>P1A</fullName>
        </alternativeName>
        <alternativeName>
            <fullName>Virion protein 4</fullName>
        </alternativeName>
    </component>
    <component>
        <recommendedName>
            <fullName>Capsid protein VP2</fullName>
        </recommendedName>
        <alternativeName>
            <fullName>P1B</fullName>
        </alternativeName>
        <alternativeName>
            <fullName>Virion protein 2</fullName>
        </alternativeName>
    </component>
    <component>
        <recommendedName>
            <fullName>Capsid protein VP3</fullName>
        </recommendedName>
        <alternativeName>
            <fullName>P1C</fullName>
        </alternativeName>
        <alternativeName>
            <fullName>Virion protein 3</fullName>
        </alternativeName>
    </component>
    <component>
        <recommendedName>
            <fullName>Protein VP1-2A</fullName>
        </recommendedName>
        <alternativeName>
            <fullName>VPX</fullName>
        </alternativeName>
    </component>
    <component>
        <recommendedName>
            <fullName>Capsid protein VP1</fullName>
        </recommendedName>
        <alternativeName>
            <fullName>P1D</fullName>
        </alternativeName>
        <alternativeName>
            <fullName>Virion protein 1</fullName>
        </alternativeName>
    </component>
    <component>
        <recommendedName>
            <fullName>Assembly signal 2A</fullName>
        </recommendedName>
        <alternativeName>
            <fullName evidence="4">pX</fullName>
        </alternativeName>
    </component>
    <component>
        <recommendedName>
            <fullName>Protein 2BC</fullName>
        </recommendedName>
    </component>
    <component>
        <recommendedName>
            <fullName>Protein 2B</fullName>
            <shortName>P2B</shortName>
        </recommendedName>
    </component>
    <component>
        <recommendedName>
            <fullName>Protein 2C</fullName>
            <shortName>P2C</shortName>
            <ecNumber>3.6.1.15</ecNumber>
        </recommendedName>
    </component>
    <component>
        <recommendedName>
            <fullName>Protein 3ABCD</fullName>
            <shortName>P3</shortName>
        </recommendedName>
    </component>
    <component>
        <recommendedName>
            <fullName>Protein 3ABC</fullName>
        </recommendedName>
    </component>
    <component>
        <recommendedName>
            <fullName>Protein 3AB</fullName>
        </recommendedName>
    </component>
    <component>
        <recommendedName>
            <fullName>Protein 3A</fullName>
            <shortName>P3A</shortName>
        </recommendedName>
    </component>
    <component>
        <recommendedName>
            <fullName>Viral protein genome-linked</fullName>
            <shortName>VPg</shortName>
        </recommendedName>
        <alternativeName>
            <fullName>Protein 3B</fullName>
            <shortName>P3B</shortName>
        </alternativeName>
    </component>
    <component>
        <recommendedName>
            <fullName>Protein 3CD</fullName>
        </recommendedName>
    </component>
    <component>
        <recommendedName>
            <fullName>Protease 3C</fullName>
            <shortName>P3C</shortName>
            <ecNumber evidence="4">3.4.22.28</ecNumber>
        </recommendedName>
        <alternativeName>
            <fullName>Picornain 3C</fullName>
        </alternativeName>
    </component>
    <component>
        <recommendedName>
            <fullName>RNA-directed RNA polymerase 3D-POL</fullName>
            <shortName>P3D-POL</shortName>
            <ecNumber evidence="4">2.7.7.48</ecNumber>
        </recommendedName>
    </component>
</protein>
<dbReference type="EC" id="3.6.1.15"/>
<dbReference type="EC" id="3.4.22.28" evidence="4"/>
<dbReference type="EC" id="2.7.7.48" evidence="4"/>
<dbReference type="EMBL" id="AY644676">
    <property type="protein sequence ID" value="AAU87586.1"/>
    <property type="molecule type" value="Genomic_RNA"/>
</dbReference>
<dbReference type="EMBL" id="L07693">
    <property type="status" value="NOT_ANNOTATED_CDS"/>
    <property type="molecule type" value="Genomic_RNA"/>
</dbReference>
<dbReference type="PIR" id="PQ0432">
    <property type="entry name" value="PQ0432"/>
</dbReference>
<dbReference type="SMR" id="Q5Y944"/>
<dbReference type="MEROPS" id="C03.005"/>
<dbReference type="Proteomes" id="UP000007899">
    <property type="component" value="Genome"/>
</dbReference>
<dbReference type="GO" id="GO:0044162">
    <property type="term" value="C:host cell cytoplasmic vesicle membrane"/>
    <property type="evidence" value="ECO:0007669"/>
    <property type="project" value="UniProtKB-SubCell"/>
</dbReference>
<dbReference type="GO" id="GO:0044193">
    <property type="term" value="C:host cell mitochondrial outer membrane"/>
    <property type="evidence" value="ECO:0007669"/>
    <property type="project" value="UniProtKB-SubCell"/>
</dbReference>
<dbReference type="GO" id="GO:0072494">
    <property type="term" value="C:host multivesicular body"/>
    <property type="evidence" value="ECO:0007669"/>
    <property type="project" value="UniProtKB-SubCell"/>
</dbReference>
<dbReference type="GO" id="GO:0016020">
    <property type="term" value="C:membrane"/>
    <property type="evidence" value="ECO:0007669"/>
    <property type="project" value="UniProtKB-KW"/>
</dbReference>
<dbReference type="GO" id="GO:0039618">
    <property type="term" value="C:T=pseudo3 icosahedral viral capsid"/>
    <property type="evidence" value="ECO:0007669"/>
    <property type="project" value="UniProtKB-KW"/>
</dbReference>
<dbReference type="GO" id="GO:0005524">
    <property type="term" value="F:ATP binding"/>
    <property type="evidence" value="ECO:0007669"/>
    <property type="project" value="UniProtKB-KW"/>
</dbReference>
<dbReference type="GO" id="GO:0015267">
    <property type="term" value="F:channel activity"/>
    <property type="evidence" value="ECO:0007669"/>
    <property type="project" value="UniProtKB-KW"/>
</dbReference>
<dbReference type="GO" id="GO:0004197">
    <property type="term" value="F:cysteine-type endopeptidase activity"/>
    <property type="evidence" value="ECO:0007669"/>
    <property type="project" value="UniProtKB-EC"/>
</dbReference>
<dbReference type="GO" id="GO:0017111">
    <property type="term" value="F:ribonucleoside triphosphate phosphatase activity"/>
    <property type="evidence" value="ECO:0007669"/>
    <property type="project" value="UniProtKB-EC"/>
</dbReference>
<dbReference type="GO" id="GO:0003723">
    <property type="term" value="F:RNA binding"/>
    <property type="evidence" value="ECO:0007669"/>
    <property type="project" value="UniProtKB-KW"/>
</dbReference>
<dbReference type="GO" id="GO:0003724">
    <property type="term" value="F:RNA helicase activity"/>
    <property type="evidence" value="ECO:0007669"/>
    <property type="project" value="InterPro"/>
</dbReference>
<dbReference type="GO" id="GO:0003968">
    <property type="term" value="F:RNA-directed RNA polymerase activity"/>
    <property type="evidence" value="ECO:0007669"/>
    <property type="project" value="UniProtKB-KW"/>
</dbReference>
<dbReference type="GO" id="GO:0005198">
    <property type="term" value="F:structural molecule activity"/>
    <property type="evidence" value="ECO:0007669"/>
    <property type="project" value="InterPro"/>
</dbReference>
<dbReference type="GO" id="GO:0006351">
    <property type="term" value="P:DNA-templated transcription"/>
    <property type="evidence" value="ECO:0007669"/>
    <property type="project" value="InterPro"/>
</dbReference>
<dbReference type="GO" id="GO:0034220">
    <property type="term" value="P:monoatomic ion transmembrane transport"/>
    <property type="evidence" value="ECO:0007669"/>
    <property type="project" value="UniProtKB-KW"/>
</dbReference>
<dbReference type="GO" id="GO:0006508">
    <property type="term" value="P:proteolysis"/>
    <property type="evidence" value="ECO:0007669"/>
    <property type="project" value="UniProtKB-KW"/>
</dbReference>
<dbReference type="GO" id="GO:0046718">
    <property type="term" value="P:symbiont entry into host cell"/>
    <property type="evidence" value="ECO:0007669"/>
    <property type="project" value="UniProtKB-KW"/>
</dbReference>
<dbReference type="GO" id="GO:0039545">
    <property type="term" value="P:symbiont-mediated suppression of host cytoplasmic pattern recognition receptor signaling pathway via inhibition of MAVS activity"/>
    <property type="evidence" value="ECO:0007669"/>
    <property type="project" value="UniProtKB-KW"/>
</dbReference>
<dbReference type="GO" id="GO:0039694">
    <property type="term" value="P:viral RNA genome replication"/>
    <property type="evidence" value="ECO:0007669"/>
    <property type="project" value="InterPro"/>
</dbReference>
<dbReference type="GO" id="GO:0019062">
    <property type="term" value="P:virion attachment to host cell"/>
    <property type="evidence" value="ECO:0007669"/>
    <property type="project" value="UniProtKB-KW"/>
</dbReference>
<dbReference type="CDD" id="cd23215">
    <property type="entry name" value="Hepatovirus_RdRp"/>
    <property type="match status" value="1"/>
</dbReference>
<dbReference type="CDD" id="cd00205">
    <property type="entry name" value="rhv_like"/>
    <property type="match status" value="2"/>
</dbReference>
<dbReference type="FunFam" id="2.60.120.20:FF:000016">
    <property type="entry name" value="Genome polyprotein"/>
    <property type="match status" value="1"/>
</dbReference>
<dbReference type="FunFam" id="3.30.70.270:FF:000111">
    <property type="entry name" value="Genome polyprotein"/>
    <property type="match status" value="1"/>
</dbReference>
<dbReference type="Gene3D" id="1.20.960.20">
    <property type="match status" value="1"/>
</dbReference>
<dbReference type="Gene3D" id="2.60.120.20">
    <property type="match status" value="3"/>
</dbReference>
<dbReference type="Gene3D" id="3.30.70.270">
    <property type="match status" value="1"/>
</dbReference>
<dbReference type="Gene3D" id="2.40.10.10">
    <property type="entry name" value="Trypsin-like serine proteases"/>
    <property type="match status" value="2"/>
</dbReference>
<dbReference type="InterPro" id="IPR049133">
    <property type="entry name" value="2B_soluble"/>
</dbReference>
<dbReference type="InterPro" id="IPR043502">
    <property type="entry name" value="DNA/RNA_pol_sf"/>
</dbReference>
<dbReference type="InterPro" id="IPR004004">
    <property type="entry name" value="Helic/Pol/Pept_Calicivir-typ"/>
</dbReference>
<dbReference type="InterPro" id="IPR000605">
    <property type="entry name" value="Helicase_SF3_ssDNA/RNA_vir"/>
</dbReference>
<dbReference type="InterPro" id="IPR014759">
    <property type="entry name" value="Helicase_SF3_ssRNA_vir"/>
</dbReference>
<dbReference type="InterPro" id="IPR024354">
    <property type="entry name" value="Hepatitis_A_VP1-2A"/>
</dbReference>
<dbReference type="InterPro" id="IPR027417">
    <property type="entry name" value="P-loop_NTPase"/>
</dbReference>
<dbReference type="InterPro" id="IPR044067">
    <property type="entry name" value="PCV_3C_PRO"/>
</dbReference>
<dbReference type="InterPro" id="IPR000199">
    <property type="entry name" value="Peptidase_C3A/C3B_picornavir"/>
</dbReference>
<dbReference type="InterPro" id="IPR009003">
    <property type="entry name" value="Peptidase_S1_PA"/>
</dbReference>
<dbReference type="InterPro" id="IPR043504">
    <property type="entry name" value="Peptidase_S1_PA_chymotrypsin"/>
</dbReference>
<dbReference type="InterPro" id="IPR001676">
    <property type="entry name" value="Picornavirus_capsid"/>
</dbReference>
<dbReference type="InterPro" id="IPR043128">
    <property type="entry name" value="Rev_trsase/Diguanyl_cyclase"/>
</dbReference>
<dbReference type="InterPro" id="IPR033703">
    <property type="entry name" value="Rhv-like"/>
</dbReference>
<dbReference type="InterPro" id="IPR001205">
    <property type="entry name" value="RNA-dir_pol_C"/>
</dbReference>
<dbReference type="InterPro" id="IPR007094">
    <property type="entry name" value="RNA-dir_pol_PSvirus"/>
</dbReference>
<dbReference type="InterPro" id="IPR029053">
    <property type="entry name" value="Viral_coat"/>
</dbReference>
<dbReference type="Pfam" id="PF20758">
    <property type="entry name" value="2B_soluble"/>
    <property type="match status" value="1"/>
</dbReference>
<dbReference type="Pfam" id="PF12944">
    <property type="entry name" value="HAV_VP"/>
    <property type="match status" value="1"/>
</dbReference>
<dbReference type="Pfam" id="PF00548">
    <property type="entry name" value="Peptidase_C3"/>
    <property type="match status" value="1"/>
</dbReference>
<dbReference type="Pfam" id="PF00680">
    <property type="entry name" value="RdRP_1"/>
    <property type="match status" value="1"/>
</dbReference>
<dbReference type="Pfam" id="PF00073">
    <property type="entry name" value="Rhv"/>
    <property type="match status" value="2"/>
</dbReference>
<dbReference type="Pfam" id="PF00910">
    <property type="entry name" value="RNA_helicase"/>
    <property type="match status" value="1"/>
</dbReference>
<dbReference type="PRINTS" id="PR00918">
    <property type="entry name" value="CALICVIRUSNS"/>
</dbReference>
<dbReference type="SUPFAM" id="SSF56672">
    <property type="entry name" value="DNA/RNA polymerases"/>
    <property type="match status" value="1"/>
</dbReference>
<dbReference type="SUPFAM" id="SSF52540">
    <property type="entry name" value="P-loop containing nucleoside triphosphate hydrolases"/>
    <property type="match status" value="1"/>
</dbReference>
<dbReference type="SUPFAM" id="SSF88633">
    <property type="entry name" value="Positive stranded ssRNA viruses"/>
    <property type="match status" value="3"/>
</dbReference>
<dbReference type="SUPFAM" id="SSF50494">
    <property type="entry name" value="Trypsin-like serine proteases"/>
    <property type="match status" value="1"/>
</dbReference>
<dbReference type="PROSITE" id="PS51874">
    <property type="entry name" value="PCV_3C_PRO"/>
    <property type="match status" value="1"/>
</dbReference>
<dbReference type="PROSITE" id="PS50507">
    <property type="entry name" value="RDRP_SSRNA_POS"/>
    <property type="match status" value="1"/>
</dbReference>
<dbReference type="PROSITE" id="PS51218">
    <property type="entry name" value="SF3_HELICASE_2"/>
    <property type="match status" value="1"/>
</dbReference>
<comment type="function">
    <molecule>Capsid protein VP1</molecule>
    <text evidence="4">Capsid proteins VP1, VP2, and VP3 form a closed capsid enclosing the viral positive strand RNA genome. All these proteins contain a beta-sheet structure called beta-barrel jelly roll. Together they form an icosahedral capsid (T=3) composed of 60 copies of each VP1, VP2, and VP3, with a diameter of approximately 300 Angstroms. VP1 is situated at the 12 fivefold axes, whereas VP2 and VP3 are located at the quasi-sixfold axes. The naked capsid interacts with the host receptor HAVCR1 to provide virion attachment to and probably entry into the target cell.</text>
</comment>
<comment type="function">
    <molecule>Capsid protein VP2</molecule>
    <text evidence="4">Capsid proteins VP1, VP2, and VP3 form a closed capsid enclosing the viral positive strand RNA genome. All these proteins contain a beta-sheet structure called beta-barrel jelly roll. Together they form an icosahedral capsid (T=3) composed of 60 copies of each VP1, VP2, and VP3, with a diameter of approximately 300 Angstroms. VP1 is situated at the 12 fivefold axes, whereas VP2 and VP3 are located at the quasi-sixfold axes. The naked capsid interacts with the host receptor HAVCR1 to provide virion attachment to and probably entry into the target cell.</text>
</comment>
<comment type="function">
    <molecule>Capsid protein VP3</molecule>
    <text evidence="4">Capsid proteins VP1, VP2, and VP3 form a closed capsid enclosing the viral positive strand RNA genome. All these proteins contain a beta-sheet structure called beta-barrel jelly roll. Together they form an icosahedral capsid (T=3) composed of 60 copies of each VP1, VP2, and VP3, with a diameter of approximately 300 Angstroms. VP1 is situated at the 12 fivefold axes, whereas VP2 and VP3 are located at the quasi-sixfold axes. The naked capsid interacts with the host receptor HAVCR1 to provide virion attachment to and probably entry into the target cell.</text>
</comment>
<comment type="function">
    <molecule>Capsid protein VP0</molecule>
    <text evidence="4">VP0 precursor is a component of the immature procapsids.</text>
</comment>
<comment type="function">
    <molecule>Capsid protein VP4</molecule>
    <text evidence="4">Plays a role in the assembly of the 12 pentamers into an icosahedral structure. Has not been detected in mature virions, supposedly owing to its small size.</text>
</comment>
<comment type="function">
    <molecule>Protein VP1-2A</molecule>
    <text evidence="4">Precursor component of immature procapsids that corresponds to an extended form of the structural protein VP1. After maturation, possibly by the host Cathepsin L, the assembly signal 2A is cleaved to give rise to the mature VP1 protein.</text>
</comment>
<comment type="function">
    <molecule>Protein 2B</molecule>
    <text evidence="4">Functions as a viroporin. Affects membrane integrity and causes an increase in membrane permeability. Involved in host intracellular membrane rearrangements probably to give rise to the viral factories. Does not disrupt calcium homeostasis or glycoprotein trafficking. Antagonizes the innate immune response of the host by suppressing IFN-beta synthesis, which it achieves by interfering with the RIG-I/IFIH1 pathway.</text>
</comment>
<comment type="function">
    <molecule>Protein 2BC</molecule>
    <text evidence="4">Affects membrane integrity and causes an increase in membrane permeability.</text>
</comment>
<comment type="function">
    <molecule>Protein 2C</molecule>
    <text evidence="4">Associates with and induces structural rearrangements of intracellular membranes. Displays RNA-binding activity.</text>
</comment>
<comment type="function">
    <molecule>Protein 3ABC</molecule>
    <text evidence="4">The precursor 3ABC is targeted to the mitochondrial membrane where protease 3C activity cleaves and inhibits the host antiviral protein MAVS, thereby disrupting activation of IRF3 through the IFIH1/MDA5 pathway. In vivo, the protease activity of 3ABC precursor is more efficient in cleaving the 2BC precursor than that of protein 3C. The 3ABC precursor may therefore play a role in the proteolytic processing of the polyprotein. Possible viroporin.</text>
</comment>
<comment type="function">
    <molecule>Protein 3AB</molecule>
    <text evidence="4">Interacts with the 3CD precursor and with RNA structures found at both the 5'- and 3'-termini of the viral genome. Since the 3AB precursor contains the hydrophobic domain 3A, it probably anchors the whole viral replicase complex to intracellular membranes on which viral RNA synthesis occurs.</text>
</comment>
<comment type="function">
    <molecule>Protein 3A</molecule>
    <text evidence="4">May serve as membrane anchor to the 3AB and 3ABC precursors via its hydrophobic domain. May interact with RNA.</text>
</comment>
<comment type="function">
    <molecule>Viral protein genome-linked</molecule>
    <text evidence="2 4">Acts as a primer for viral RNA replication and remains covalently bound to viral genomic RNA. VPg is uridylylated prior to priming replication into VPg-pUpU. The VPg-pUpU is then used as primer on the genomic RNA poly(A) by the RNA-dependent RNA polymerase to replicate the viral genome.</text>
</comment>
<comment type="function">
    <molecule>Protease 3C</molecule>
    <text evidence="4">Cysteine protease that generates mature viral proteins from the precursor polyprotein. In addition to its proteolytic activity, it binds to viral RNA, and thus influences viral genome replication. RNA and substrate bind cooperatively to the protease. Cleaves IKBKG/NEMO to impair innate immune signaling. Cleaves host PABPC1 which may participate in the switch of viral translation to RNA synthesis.</text>
</comment>
<comment type="function">
    <molecule>Protein 3CD</molecule>
    <text evidence="4">Interacts with the 3AB precursor and with RNA structures found at both the 5'- and 3'-termini of the viral genome. Disrupts TLR3 signaling by degrading the host adapter protein TICAM1/TRIF.</text>
</comment>
<comment type="function">
    <text evidence="4">RNA-directed RNA polymerase 3D-POL replicates genomic and antigenomic RNA by recognizing replications specific signals.</text>
</comment>
<comment type="catalytic activity">
    <reaction evidence="4 6">
        <text>RNA(n) + a ribonucleoside 5'-triphosphate = RNA(n+1) + diphosphate</text>
        <dbReference type="Rhea" id="RHEA:21248"/>
        <dbReference type="Rhea" id="RHEA-COMP:14527"/>
        <dbReference type="Rhea" id="RHEA-COMP:17342"/>
        <dbReference type="ChEBI" id="CHEBI:33019"/>
        <dbReference type="ChEBI" id="CHEBI:61557"/>
        <dbReference type="ChEBI" id="CHEBI:140395"/>
        <dbReference type="EC" id="2.7.7.48"/>
    </reaction>
</comment>
<comment type="catalytic activity">
    <reaction evidence="4">
        <text>a ribonucleoside 5'-triphosphate + H2O = a ribonucleoside 5'-diphosphate + phosphate + H(+)</text>
        <dbReference type="Rhea" id="RHEA:23680"/>
        <dbReference type="ChEBI" id="CHEBI:15377"/>
        <dbReference type="ChEBI" id="CHEBI:15378"/>
        <dbReference type="ChEBI" id="CHEBI:43474"/>
        <dbReference type="ChEBI" id="CHEBI:57930"/>
        <dbReference type="ChEBI" id="CHEBI:61557"/>
        <dbReference type="EC" id="3.6.1.15"/>
    </reaction>
</comment>
<comment type="catalytic activity">
    <reaction evidence="8">
        <text>Selective cleavage of Gln-|-Gly bond in the poliovirus polyprotein. In other picornavirus reactions Glu may be substituted for Gln, and Ser or Thr for Gly.</text>
        <dbReference type="EC" id="3.4.22.28"/>
    </reaction>
</comment>
<comment type="subunit">
    <molecule>Protein 2B</molecule>
    <text evidence="4">Homodimer. Homomultimer; probably interacts with membranes in a multimeric form. Seems to assemble into amyloid-like fibers.</text>
</comment>
<comment type="subunit">
    <molecule>Protein 3AB</molecule>
    <text evidence="4">Homodimer. Monomer. Interacts with protein 3CD.</text>
</comment>
<comment type="subunit">
    <molecule>Protein 3A</molecule>
    <text evidence="4">Interacts with host ACBD3 (By similarity).</text>
</comment>
<comment type="subunit">
    <molecule>Protein 3CD</molecule>
    <text evidence="4">Interacts with protein 3AB.</text>
</comment>
<comment type="subunit">
    <molecule>Protein 3ABC</molecule>
    <text evidence="4">Interacts with human MAVS.</text>
</comment>
<comment type="subunit">
    <molecule>Protease 3C</molecule>
    <text evidence="4">Homodimer; disulfide-linked.</text>
</comment>
<comment type="subunit">
    <molecule>Protein VP1-2A</molecule>
    <text evidence="4">Homopentamer. Homooligomer.</text>
</comment>
<comment type="subunit">
    <molecule>Capsid protein VP1</molecule>
    <text evidence="4">Interacts with capsid protein VP2. Interacts with capsid protein VP3.</text>
</comment>
<comment type="subunit">
    <molecule>Capsid protein VP2</molecule>
    <text evidence="4">Interacts with capsid protein VP1. Interacts with capsid protein VP3.</text>
</comment>
<comment type="subunit">
    <molecule>Capsid protein VP3</molecule>
    <text evidence="4">Interacts with capsid protein VP1. Interacts with capsid protein VP2.</text>
</comment>
<comment type="subcellular location">
    <molecule>Capsid protein VP2</molecule>
    <subcellularLocation>
        <location evidence="4">Virion</location>
    </subcellularLocation>
    <subcellularLocation>
        <location evidence="4">Host endosome</location>
        <location evidence="4">Host multivesicular body</location>
    </subcellularLocation>
    <text evidence="4">The egress of newly formed virions occurs through an exosome-like mechanism involving endosomal budding of viral capsids into multivesicular bodies.</text>
</comment>
<comment type="subcellular location">
    <molecule>Capsid protein VP3</molecule>
    <subcellularLocation>
        <location evidence="4">Virion</location>
    </subcellularLocation>
    <subcellularLocation>
        <location evidence="4">Host endosome</location>
        <location evidence="4">Host multivesicular body</location>
    </subcellularLocation>
    <text evidence="4">The egress of newly formed virions occurs through an exosome-like mechanism involving endosomal budding of viral capsids into multivesicular bodies.</text>
</comment>
<comment type="subcellular location">
    <molecule>Capsid protein VP1</molecule>
    <subcellularLocation>
        <location evidence="4">Virion</location>
    </subcellularLocation>
    <subcellularLocation>
        <location evidence="4">Host endosome</location>
        <location evidence="4">Host multivesicular body</location>
    </subcellularLocation>
    <text evidence="4">The egress of newly formed virions occurs through an exosome-like mechanism involving endosomal budding of viral capsids into multivesicular bodies.</text>
</comment>
<comment type="subcellular location">
    <molecule>Capsid protein VP4</molecule>
    <subcellularLocation>
        <location evidence="4">Virion</location>
    </subcellularLocation>
    <text evidence="4">Present in the full mature virion. The egress of newly formed virions occurs through an exosome-like mechanism involving endosomal budding of viral capsids into multivesicular bodies.</text>
</comment>
<comment type="subcellular location">
    <molecule>Protein 2B</molecule>
    <subcellularLocation>
        <location evidence="4">Host membrane</location>
        <topology evidence="4">Peripheral membrane protein</topology>
    </subcellularLocation>
    <text evidence="4">Probably localizes to intracellular membrane vesicles that are induced after virus infection as the site for viral RNA replication.</text>
</comment>
<comment type="subcellular location">
    <molecule>Protein 2C</molecule>
    <subcellularLocation>
        <location evidence="4">Host membrane</location>
        <topology evidence="4">Single-pass membrane protein</topology>
    </subcellularLocation>
    <text evidence="4">Probably localizes to intracellular membrane vesicles that are induced after virus infection as the site for viral RNA replication. May associate with membranes through a N-terminal amphipathic helix.</text>
</comment>
<comment type="subcellular location">
    <molecule>Protein 3ABC</molecule>
    <subcellularLocation>
        <location evidence="4">Host membrane</location>
        <topology evidence="5">Single-pass membrane protein</topology>
    </subcellularLocation>
    <subcellularLocation>
        <location evidence="4">Host mitochondrion outer membrane</location>
        <topology evidence="4">Single-pass membrane protein</topology>
    </subcellularLocation>
    <text evidence="4">Probably localizes to intracellular membrane vesicles that are induced after virus infection as the site for viral RNA replication.</text>
</comment>
<comment type="subcellular location">
    <molecule>Protein 3AB</molecule>
    <subcellularLocation>
        <location evidence="4">Host membrane</location>
        <topology evidence="5">Single-pass membrane protein</topology>
    </subcellularLocation>
    <text evidence="4">Probably localizes to intracellular membrane vesicles that are induced after virus infection as the site for viral RNA replication.</text>
</comment>
<comment type="subcellular location">
    <molecule>Protein 3A</molecule>
    <subcellularLocation>
        <location evidence="4">Host membrane</location>
        <topology evidence="5">Single-pass membrane protein</topology>
    </subcellularLocation>
    <text evidence="4">Probably localizes to intracellular membrane vesicles that are induced after virus infection as the site for viral RNA replication.</text>
</comment>
<comment type="subcellular location">
    <molecule>Viral protein genome-linked</molecule>
    <subcellularLocation>
        <location evidence="4">Virion</location>
    </subcellularLocation>
</comment>
<comment type="subcellular location">
    <molecule>Protease 3C</molecule>
    <subcellularLocation>
        <location evidence="4">Host cytoplasm</location>
    </subcellularLocation>
</comment>
<comment type="subcellular location">
    <molecule>RNA-directed RNA polymerase 3D-POL</molecule>
    <subcellularLocation>
        <location evidence="4">Host cytoplasmic vesicle membrane</location>
        <topology evidence="4">Peripheral membrane protein</topology>
        <orientation evidence="4">Cytoplasmic side</orientation>
    </subcellularLocation>
    <text evidence="4">Interacts with membranes in a complex with viral protein 3AB. Probably localizes to the surface of intracellular membrane vesicles that are induced after virus infection as the site for viral RNA replication. These vesicles are derived from the endoplasmic reticulum.</text>
</comment>
<comment type="domain">
    <molecule>Protein VP1-2A</molecule>
    <text evidence="4">The assembly signal 2A region mediates pentamerization of P1-2A.</text>
</comment>
<comment type="domain">
    <molecule>Genome polyprotein</molecule>
    <text evidence="4">Late-budding domains (L domains) are short sequence motifs essential for viral particle budding. They recruit proteins of the host ESCRT machinery (Endosomal Sorting Complex Required for Transport) or ESCRT-associated proteins. The genome polyprotein contains two L domains: a tandem of (L)YPX(n)L domain which is known to bind the PDCD6IP/ALIX adaptater protein.</text>
</comment>
<comment type="domain">
    <molecule>Capsid protein VP2</molecule>
    <text evidence="4">Late-budding domains (L domains) are short sequence motifs essential for viral particle budding. They recruit proteins of the host ESCRT machinery (Endosomal Sorting Complex Required for Transport) or ESCRT-associated proteins. Capsid protein VP2 contains two L domains: a tandem of (L)YPX(n)L domain which is known to bind the Alix adaptater protein.</text>
</comment>
<comment type="domain">
    <molecule>Protein 2B</molecule>
    <text evidence="4">The C-terminus displays a membrane-penetrating ability.</text>
</comment>
<comment type="PTM">
    <molecule>Genome polyprotein</molecule>
    <text evidence="4">Specific enzymatic cleavages by viral protease in vivo yield a variety of precursors and mature proteins. Polyprotein processing intermediates are produced, such as P1-2A which is a functional precursor of the structural proteins, VP0 which is a VP4-VP2 precursor, VP1-2A precursor, 3ABC precursor which is a stable and catalytically active precursor of 3A, 3B and 3C proteins, 3AB and 3CD precursors. The assembly signal 2A is removed from VP1-2A by a host protease, possibly host Cathepsin L. This cleavage occurs over a region of 3 amino-acids probably generating VP1 proteins with heterogeneous C-termini.</text>
</comment>
<comment type="PTM">
    <molecule>Capsid protein VP0</molecule>
    <text evidence="3">During virion maturation, immature virions are rendered infectious following cleavage of VP0 into VP4 and VP2. This maturation seems to be an autocatalytic event triggered by the presence of RNA in the capsid and is followed by a conformational change of the particle.</text>
</comment>
<comment type="PTM">
    <molecule>Protein VP1-2A</molecule>
    <text evidence="4">The assembly signal 2A is removed from VP1-2A by a host protease, possibly host Cathepsin L in naked virions. This cleavage does not occur in enveloped virions. This cleavage occurs over a region of 3 amino-acids probably generating VP1 proteins with heterogeneous C-termini.</text>
</comment>
<comment type="PTM">
    <molecule>Viral protein genome-linked</molecule>
    <text evidence="2">VPg is uridylylated prior to priming replication into VPg-pUpU.</text>
</comment>
<comment type="PTM">
    <molecule>Capsid protein VP4</molecule>
    <text evidence="4">Unlike other picornaviruses, does not seem to be myristoylated.</text>
</comment>
<comment type="miscellaneous">
    <molecule>Genome polyprotein</molecule>
    <text evidence="4">The need for an intact eIF4G factor for the initiation of translation of HAV results in an inability to shut off host protein synthesis by a mechanism similar to that of other picornaviruses.</text>
</comment>
<comment type="miscellaneous">
    <molecule>Genome polyprotein</molecule>
    <text evidence="4">During infection, enveloped virions (eHAV) are released from cells. These eHAV are cloaked in host-derived membranes and resemble exosomes. The membrane of eHAV is devoid of viral proteins and thus prevents their neutralization by antibodies. eHAV budding is dependent on ESCRT-associated proteins VPS4B and PDCD6IP/ALIX. eHAV are produced and released in the serum and plasma, but not in bile and feces which only contain the naked, nonenveloped virions. It is likely that eHAV also use HAVCR1 as a functional receptor to infect cells, an evolutionary trait that may enhance HAV infectivity.</text>
</comment>
<comment type="similarity">
    <text evidence="9">Belongs to the picornaviridae polyprotein family.</text>
</comment>
<comment type="caution">
    <text evidence="4">It is uncertain whether Met-1 or Met-3 is the initiator.</text>
</comment>
<sequence>MNMSRQGIFQTVGSGLDHILSLADIEEEQMIQSVDRTAVTGASYFTSVDQSSVHTAEVGSHQIEPLKTSVDKPGSKKTQGEKFFLIHSADWLTTHALFHEVAKLDVVKLLYNEQFAVQGLLRYHTYARFGIEIQVQINPTPFQQGGLICAMVPGDQSYGSIASLTVYPHGLLNCNINNVVRIKVPFIYTRGAYHFKDPQYPVWELTIRVWSELNIGTGTSAYTSLNVLARFTDLELHGLTPLSTQMMRNEFRVSTTENVVNLSNYEDARAKMSFALDQEDWKSDPSQGGGIKITHFTTWTSIPTLAAQFPFNASDSVGQQIKVIPVDPYFFQMTNSNPDQKCITALASICQMFCFWRGDLVFDFQVFPTKYHSGRLLFCFVPGNELIDVSGITLKQATTAPCAVMDIAGVQSTLRFRVPWIPDTRYRVNRYTKSAHQKGEYTAIGKLIVYCYNRLTSPSNVASHVRVNVYLSAINLECFAPLYHAMDVTTQVGDDSGGFSTTVSTEQNVPDPQVGITTMRDLKGKANRGKMDVSGVQAPVGAITTIEDPVLAKKVPETFPELKPGESRHTSDHMSIYKFMGRSHFLCTFTFNSNNKEYTFPITLSSTSNPPHGLPSTLRWFFNLFQLYRGPLDLTIIITGATDVDGMAWFTPVGLAVDTPWVEKESALSIDYKTALGAVRFNTRRTGNIQIRLPWYSYLYAVSGALDGLGDKTDSTFGLVSIQIANYNHSDEYLSFSCYLSVTEQSEFYFPRAPLNSNAMLSTETMMSRIAAGDLESSVDDPRSEEDRRFESHIESRKPYKELRLEVGKQRLKYAQEELSNEVLPPPRKMKGLFSQAKISLFYTEEHEIMKFSWRGVTADTRALRRFGFSLAAGRSVWTLEMDAGVLTGRLVRLNDEKWTEMKDDKIVSLVEKFTSNKHWSKVNFPHGMLDLEEIAANSKDFPNMSETDLCFLLHWLNPKKINLADRMLGLSGVQEIKEQGIGLIAECRTFLDSITGSLKSMMFGFHHSVTVDIVNIVLCFVKSGILLYVIQQLNQDEHSHIIGLLRVMNYADIGCSVISCGKVFSKMLETVFNWQMDSRMMELRTQSFSNWLRDICSGITIFKSFKDAIYWLYTKLKDFYDMNYGKKKDVLNVLKDNQQRIERAIEEADNFCMLQIQDVEKFEQFQKGVDLIQKLRTVHSMAQVDSSLMIHLSPLRDCIARVHQKLKNLGSINQAMVTRCEPVVCYLYGKRGGGKSLTSIALATKICKHYGVEPEKNIYTKPVASDYWDGYSGQLVCIIDDIGQNTTDEDWSDFCQLVSGCPMRLNMASLEEKGRHFSSPFIIATSNWSNPSPKTVYVKEAIDRRLHFKIEVKPASFFQNPHNDMLNVNLAKTSDAIKDMSCVDLIMDGHNISLMDLLSSLVMTVEIRKQNMTEFMELWSQGISDDDSAVAEFFQSFPSGEPSSSKLSGFFQSVTNHKWVAVGAAVGILGVLVGGWFVYKHFSRKEEEPIPTEGVYHGVTKPKQVIKLDADPVESQSTLEIAGLVRKNLVQFGVGEKNGCVRWVMNALGVKDDWLLVPSHAYKFEKDYEMMEFYFNRGGTYYSISAGNVVIQSLDVGFQDVVLMKVPTIPKFRDITEHFIKKGDVPRALNRLATLVTTVNGTPMLISEGPLKMEEKATYVHKKNDGTTVDLTVDQAWRGKGEGLPGMCGGALISSNQSIQNAILGIHVAGGNSILVAKLVTQEMFQNIDKKIESQRIMKVEFSQCSMNVVSKTLFKKSPIHHHIDKDMINFPAAMPFSRAEIDPMAVMLSKYSLPMVEEPEGYKDVSIFFQNKIMGKSILVDDFLDLDMAITGTPGIDAINMDSSPGFPYVQEKLTKRDLIWLHENGLLLGIHPRLAQRILFNTVMMENCSDLDVVFTTCPKDELRPLDKVLESKTRAIDACPLDYTILCRMYWGPAISYFHLNPGFHTGVAIGIDPDKQWDELFKTMIRFGDVGLDLDFSAFDASLSPFMIREAGRIMSEISGTPSHFGTALINTIIYSKHLLYNCCYHVYGSMPSGSPCTALLNSIINNINLYYVFAKIFRKSPVFFSQAVRILCYGDDVLVVFSRDIQIDNLDQIGQKIVHEFKELGMTATSADKTVPQLKPVSELTFLKRSFNLVEDRIRPAISEKTIWSLVAWQRSNAEFEQNLENAQWFAFMHGFEFYQKFYYFVQSCLEKEMIEYRLKSYDWWRMRFYDQCFVCDLS</sequence>